<sequence length="184" mass="20949">MMSQPAKVLLLYAHPESQDSVANRVLLKPATQLSNVTAHDLYAHYPDFFIDIPREQALLREHEVIVFQRPLYTYSCPALLKEWLDRVLSRGFASGPGGNQLAGKYWRSVITTGEPESAYRYDALNRYPMSDVLRPFELAAGMCRMHWLSPIIIYWARRQSAQELASHARAYGDWLANPLSPGGR</sequence>
<feature type="chain" id="PRO_1000068483" description="Glutathione-regulated potassium-efflux system ancillary protein KefG">
    <location>
        <begin position="1"/>
        <end position="184"/>
    </location>
</feature>
<comment type="function">
    <text evidence="1">Regulatory subunit of a potassium efflux system that confers protection against electrophiles. Required for full activity of KefB.</text>
</comment>
<comment type="catalytic activity">
    <reaction evidence="1">
        <text>a quinone + NADH + H(+) = a quinol + NAD(+)</text>
        <dbReference type="Rhea" id="RHEA:46160"/>
        <dbReference type="ChEBI" id="CHEBI:15378"/>
        <dbReference type="ChEBI" id="CHEBI:24646"/>
        <dbReference type="ChEBI" id="CHEBI:57540"/>
        <dbReference type="ChEBI" id="CHEBI:57945"/>
        <dbReference type="ChEBI" id="CHEBI:132124"/>
        <dbReference type="EC" id="1.6.5.2"/>
    </reaction>
</comment>
<comment type="catalytic activity">
    <reaction evidence="1">
        <text>a quinone + NADPH + H(+) = a quinol + NADP(+)</text>
        <dbReference type="Rhea" id="RHEA:46164"/>
        <dbReference type="ChEBI" id="CHEBI:15378"/>
        <dbReference type="ChEBI" id="CHEBI:24646"/>
        <dbReference type="ChEBI" id="CHEBI:57783"/>
        <dbReference type="ChEBI" id="CHEBI:58349"/>
        <dbReference type="ChEBI" id="CHEBI:132124"/>
        <dbReference type="EC" id="1.6.5.2"/>
    </reaction>
</comment>
<comment type="subunit">
    <text evidence="1">Interacts with KefB.</text>
</comment>
<comment type="subcellular location">
    <subcellularLocation>
        <location evidence="1">Cell inner membrane</location>
        <topology evidence="1">Peripheral membrane protein</topology>
        <orientation evidence="1">Cytoplasmic side</orientation>
    </subcellularLocation>
</comment>
<comment type="similarity">
    <text evidence="1">Belongs to the NAD(P)H dehydrogenase (quinone) family. KefG subfamily.</text>
</comment>
<keyword id="KW-0997">Cell inner membrane</keyword>
<keyword id="KW-1003">Cell membrane</keyword>
<keyword id="KW-0472">Membrane</keyword>
<keyword id="KW-0520">NAD</keyword>
<keyword id="KW-0560">Oxidoreductase</keyword>
<keyword id="KW-1185">Reference proteome</keyword>
<proteinExistence type="inferred from homology"/>
<protein>
    <recommendedName>
        <fullName evidence="1">Glutathione-regulated potassium-efflux system ancillary protein KefG</fullName>
    </recommendedName>
    <alternativeName>
        <fullName evidence="1">Putative quinone oxidoreductase KefG</fullName>
        <ecNumber evidence="1">1.6.5.2</ecNumber>
    </alternativeName>
</protein>
<reference key="1">
    <citation type="journal article" date="2005" name="Nucleic Acids Res.">
        <title>Genome dynamics and diversity of Shigella species, the etiologic agents of bacillary dysentery.</title>
        <authorList>
            <person name="Yang F."/>
            <person name="Yang J."/>
            <person name="Zhang X."/>
            <person name="Chen L."/>
            <person name="Jiang Y."/>
            <person name="Yan Y."/>
            <person name="Tang X."/>
            <person name="Wang J."/>
            <person name="Xiong Z."/>
            <person name="Dong J."/>
            <person name="Xue Y."/>
            <person name="Zhu Y."/>
            <person name="Xu X."/>
            <person name="Sun L."/>
            <person name="Chen S."/>
            <person name="Nie H."/>
            <person name="Peng J."/>
            <person name="Xu J."/>
            <person name="Wang Y."/>
            <person name="Yuan Z."/>
            <person name="Wen Y."/>
            <person name="Yao Z."/>
            <person name="Shen Y."/>
            <person name="Qiang B."/>
            <person name="Hou Y."/>
            <person name="Yu J."/>
            <person name="Jin Q."/>
        </authorList>
    </citation>
    <scope>NUCLEOTIDE SEQUENCE [LARGE SCALE GENOMIC DNA]</scope>
    <source>
        <strain>Sd197</strain>
    </source>
</reference>
<evidence type="ECO:0000255" key="1">
    <source>
        <dbReference type="HAMAP-Rule" id="MF_01415"/>
    </source>
</evidence>
<dbReference type="EC" id="1.6.5.2" evidence="1"/>
<dbReference type="EMBL" id="CP000034">
    <property type="protein sequence ID" value="ABB63491.1"/>
    <property type="molecule type" value="Genomic_DNA"/>
</dbReference>
<dbReference type="RefSeq" id="YP_404982.1">
    <property type="nucleotide sequence ID" value="NC_007606.1"/>
</dbReference>
<dbReference type="SMR" id="Q32B14"/>
<dbReference type="STRING" id="300267.SDY_3513"/>
<dbReference type="EnsemblBacteria" id="ABB63491">
    <property type="protein sequence ID" value="ABB63491"/>
    <property type="gene ID" value="SDY_3513"/>
</dbReference>
<dbReference type="KEGG" id="sdy:SDY_3513"/>
<dbReference type="PATRIC" id="fig|300267.13.peg.4167"/>
<dbReference type="HOGENOM" id="CLU_058643_0_1_6"/>
<dbReference type="Proteomes" id="UP000002716">
    <property type="component" value="Chromosome"/>
</dbReference>
<dbReference type="GO" id="GO:0005886">
    <property type="term" value="C:plasma membrane"/>
    <property type="evidence" value="ECO:0007669"/>
    <property type="project" value="UniProtKB-SubCell"/>
</dbReference>
<dbReference type="GO" id="GO:0009055">
    <property type="term" value="F:electron transfer activity"/>
    <property type="evidence" value="ECO:0007669"/>
    <property type="project" value="TreeGrafter"/>
</dbReference>
<dbReference type="GO" id="GO:0010181">
    <property type="term" value="F:FMN binding"/>
    <property type="evidence" value="ECO:0007669"/>
    <property type="project" value="TreeGrafter"/>
</dbReference>
<dbReference type="GO" id="GO:0050136">
    <property type="term" value="F:NADH:ubiquinone reductase (non-electrogenic) activity"/>
    <property type="evidence" value="ECO:0007669"/>
    <property type="project" value="RHEA"/>
</dbReference>
<dbReference type="GO" id="GO:0008753">
    <property type="term" value="F:NADPH dehydrogenase (quinone) activity"/>
    <property type="evidence" value="ECO:0007669"/>
    <property type="project" value="RHEA"/>
</dbReference>
<dbReference type="GO" id="GO:1901381">
    <property type="term" value="P:positive regulation of potassium ion transmembrane transport"/>
    <property type="evidence" value="ECO:0007669"/>
    <property type="project" value="UniProtKB-UniRule"/>
</dbReference>
<dbReference type="GO" id="GO:0006813">
    <property type="term" value="P:potassium ion transport"/>
    <property type="evidence" value="ECO:0007669"/>
    <property type="project" value="InterPro"/>
</dbReference>
<dbReference type="FunFam" id="3.40.50.360:FF:000013">
    <property type="entry name" value="Glutathione-regulated potassium-efflux system ancillary protein KefG"/>
    <property type="match status" value="1"/>
</dbReference>
<dbReference type="Gene3D" id="3.40.50.360">
    <property type="match status" value="1"/>
</dbReference>
<dbReference type="HAMAP" id="MF_01415">
    <property type="entry name" value="K_H_efflux_KefG"/>
    <property type="match status" value="1"/>
</dbReference>
<dbReference type="InterPro" id="IPR003680">
    <property type="entry name" value="Flavodoxin_fold"/>
</dbReference>
<dbReference type="InterPro" id="IPR029039">
    <property type="entry name" value="Flavoprotein-like_sf"/>
</dbReference>
<dbReference type="InterPro" id="IPR023947">
    <property type="entry name" value="K_H_efflux_KefG"/>
</dbReference>
<dbReference type="InterPro" id="IPR046980">
    <property type="entry name" value="KefG/KefF"/>
</dbReference>
<dbReference type="NCBIfam" id="NF003430">
    <property type="entry name" value="PRK04930.1"/>
    <property type="match status" value="1"/>
</dbReference>
<dbReference type="PANTHER" id="PTHR47307">
    <property type="entry name" value="GLUTATHIONE-REGULATED POTASSIUM-EFFLUX SYSTEM ANCILLARY PROTEIN KEFG"/>
    <property type="match status" value="1"/>
</dbReference>
<dbReference type="PANTHER" id="PTHR47307:SF1">
    <property type="entry name" value="GLUTATHIONE-REGULATED POTASSIUM-EFFLUX SYSTEM ANCILLARY PROTEIN KEFG"/>
    <property type="match status" value="1"/>
</dbReference>
<dbReference type="Pfam" id="PF02525">
    <property type="entry name" value="Flavodoxin_2"/>
    <property type="match status" value="1"/>
</dbReference>
<dbReference type="SUPFAM" id="SSF52218">
    <property type="entry name" value="Flavoproteins"/>
    <property type="match status" value="1"/>
</dbReference>
<gene>
    <name evidence="1" type="primary">kefG</name>
    <name type="ordered locus">SDY_3513</name>
</gene>
<name>KEFG_SHIDS</name>
<accession>Q32B14</accession>
<organism>
    <name type="scientific">Shigella dysenteriae serotype 1 (strain Sd197)</name>
    <dbReference type="NCBI Taxonomy" id="300267"/>
    <lineage>
        <taxon>Bacteria</taxon>
        <taxon>Pseudomonadati</taxon>
        <taxon>Pseudomonadota</taxon>
        <taxon>Gammaproteobacteria</taxon>
        <taxon>Enterobacterales</taxon>
        <taxon>Enterobacteriaceae</taxon>
        <taxon>Shigella</taxon>
    </lineage>
</organism>